<feature type="chain" id="PRO_0000348667" description="tRNA-cytidine(32) 2-sulfurtransferase">
    <location>
        <begin position="1"/>
        <end position="315"/>
    </location>
</feature>
<feature type="short sequence motif" description="PP-loop motif" evidence="1">
    <location>
        <begin position="54"/>
        <end position="59"/>
    </location>
</feature>
<feature type="binding site" evidence="1">
    <location>
        <position position="129"/>
    </location>
    <ligand>
        <name>[4Fe-4S] cluster</name>
        <dbReference type="ChEBI" id="CHEBI:49883"/>
    </ligand>
</feature>
<feature type="binding site" evidence="1">
    <location>
        <position position="132"/>
    </location>
    <ligand>
        <name>[4Fe-4S] cluster</name>
        <dbReference type="ChEBI" id="CHEBI:49883"/>
    </ligand>
</feature>
<feature type="binding site" evidence="1">
    <location>
        <position position="220"/>
    </location>
    <ligand>
        <name>[4Fe-4S] cluster</name>
        <dbReference type="ChEBI" id="CHEBI:49883"/>
    </ligand>
</feature>
<dbReference type="EC" id="2.8.1.-" evidence="1"/>
<dbReference type="EMBL" id="AM167904">
    <property type="protein sequence ID" value="CAJ50836.1"/>
    <property type="molecule type" value="Genomic_DNA"/>
</dbReference>
<dbReference type="RefSeq" id="WP_012418863.1">
    <property type="nucleotide sequence ID" value="NC_010645.1"/>
</dbReference>
<dbReference type="SMR" id="Q2KU24"/>
<dbReference type="STRING" id="360910.BAV3226"/>
<dbReference type="KEGG" id="bav:BAV3226"/>
<dbReference type="eggNOG" id="COG0037">
    <property type="taxonomic scope" value="Bacteria"/>
</dbReference>
<dbReference type="HOGENOM" id="CLU_026481_0_0_4"/>
<dbReference type="OrthoDB" id="9801054at2"/>
<dbReference type="Proteomes" id="UP000001977">
    <property type="component" value="Chromosome"/>
</dbReference>
<dbReference type="GO" id="GO:0005737">
    <property type="term" value="C:cytoplasm"/>
    <property type="evidence" value="ECO:0007669"/>
    <property type="project" value="UniProtKB-SubCell"/>
</dbReference>
<dbReference type="GO" id="GO:0051539">
    <property type="term" value="F:4 iron, 4 sulfur cluster binding"/>
    <property type="evidence" value="ECO:0007669"/>
    <property type="project" value="UniProtKB-UniRule"/>
</dbReference>
<dbReference type="GO" id="GO:0005524">
    <property type="term" value="F:ATP binding"/>
    <property type="evidence" value="ECO:0007669"/>
    <property type="project" value="UniProtKB-UniRule"/>
</dbReference>
<dbReference type="GO" id="GO:0000287">
    <property type="term" value="F:magnesium ion binding"/>
    <property type="evidence" value="ECO:0007669"/>
    <property type="project" value="UniProtKB-UniRule"/>
</dbReference>
<dbReference type="GO" id="GO:0016783">
    <property type="term" value="F:sulfurtransferase activity"/>
    <property type="evidence" value="ECO:0007669"/>
    <property type="project" value="UniProtKB-UniRule"/>
</dbReference>
<dbReference type="GO" id="GO:0000049">
    <property type="term" value="F:tRNA binding"/>
    <property type="evidence" value="ECO:0007669"/>
    <property type="project" value="UniProtKB-KW"/>
</dbReference>
<dbReference type="GO" id="GO:0034227">
    <property type="term" value="P:tRNA thio-modification"/>
    <property type="evidence" value="ECO:0007669"/>
    <property type="project" value="UniProtKB-UniRule"/>
</dbReference>
<dbReference type="CDD" id="cd24138">
    <property type="entry name" value="TtcA-like"/>
    <property type="match status" value="1"/>
</dbReference>
<dbReference type="Gene3D" id="3.40.50.620">
    <property type="entry name" value="HUPs"/>
    <property type="match status" value="1"/>
</dbReference>
<dbReference type="HAMAP" id="MF_01850">
    <property type="entry name" value="TtcA"/>
    <property type="match status" value="1"/>
</dbReference>
<dbReference type="InterPro" id="IPR014729">
    <property type="entry name" value="Rossmann-like_a/b/a_fold"/>
</dbReference>
<dbReference type="InterPro" id="IPR011063">
    <property type="entry name" value="TilS/TtcA_N"/>
</dbReference>
<dbReference type="InterPro" id="IPR012089">
    <property type="entry name" value="tRNA_Cyd_32_2_STrfase"/>
</dbReference>
<dbReference type="InterPro" id="IPR035107">
    <property type="entry name" value="tRNA_thiolation_TtcA_Ctu1"/>
</dbReference>
<dbReference type="NCBIfam" id="NF007972">
    <property type="entry name" value="PRK10696.1"/>
    <property type="match status" value="1"/>
</dbReference>
<dbReference type="PANTHER" id="PTHR43686:SF1">
    <property type="entry name" value="AMINOTRAN_5 DOMAIN-CONTAINING PROTEIN"/>
    <property type="match status" value="1"/>
</dbReference>
<dbReference type="PANTHER" id="PTHR43686">
    <property type="entry name" value="SULFURTRANSFERASE-RELATED"/>
    <property type="match status" value="1"/>
</dbReference>
<dbReference type="Pfam" id="PF01171">
    <property type="entry name" value="ATP_bind_3"/>
    <property type="match status" value="1"/>
</dbReference>
<dbReference type="PIRSF" id="PIRSF004976">
    <property type="entry name" value="ATPase_YdaO"/>
    <property type="match status" value="1"/>
</dbReference>
<dbReference type="SUPFAM" id="SSF52402">
    <property type="entry name" value="Adenine nucleotide alpha hydrolases-like"/>
    <property type="match status" value="1"/>
</dbReference>
<keyword id="KW-0004">4Fe-4S</keyword>
<keyword id="KW-0067">ATP-binding</keyword>
<keyword id="KW-0963">Cytoplasm</keyword>
<keyword id="KW-0408">Iron</keyword>
<keyword id="KW-0411">Iron-sulfur</keyword>
<keyword id="KW-0460">Magnesium</keyword>
<keyword id="KW-0479">Metal-binding</keyword>
<keyword id="KW-0547">Nucleotide-binding</keyword>
<keyword id="KW-1185">Reference proteome</keyword>
<keyword id="KW-0694">RNA-binding</keyword>
<keyword id="KW-0808">Transferase</keyword>
<keyword id="KW-0819">tRNA processing</keyword>
<keyword id="KW-0820">tRNA-binding</keyword>
<evidence type="ECO:0000255" key="1">
    <source>
        <dbReference type="HAMAP-Rule" id="MF_01850"/>
    </source>
</evidence>
<sequence>MTRTDIERPVRTQAEEKARYEGNKLSKRLARETTRALSDYNMIEEGDRVMVCLSGGKDSYAMLDILMALQKRAPFRFELIAVNLDQKQPGFPADILPNYLSSLGVPFHIETQDTYSIVTRVLAEGKTMCSLCSRLRRGILYRVADELGATKIALGHHRDDILGTLFLNLFYGGKLKGMPPKLVSDDGRHTVIRPLAYIAETDLIAYAELKQFPIIPCNLCGSQENLKRKEVSRMVQEWDRKFPGRSWNVFNALSRVVPSHLMDRDLFDFVGLKPTGLPDANGDIAFDEPQTDDACDASAPTDGLNEQQIVFSRFS</sequence>
<organism>
    <name type="scientific">Bordetella avium (strain 197N)</name>
    <dbReference type="NCBI Taxonomy" id="360910"/>
    <lineage>
        <taxon>Bacteria</taxon>
        <taxon>Pseudomonadati</taxon>
        <taxon>Pseudomonadota</taxon>
        <taxon>Betaproteobacteria</taxon>
        <taxon>Burkholderiales</taxon>
        <taxon>Alcaligenaceae</taxon>
        <taxon>Bordetella</taxon>
    </lineage>
</organism>
<accession>Q2KU24</accession>
<gene>
    <name evidence="1" type="primary">ttcA</name>
    <name type="ordered locus">BAV3226</name>
</gene>
<name>TTCA_BORA1</name>
<proteinExistence type="inferred from homology"/>
<comment type="function">
    <text evidence="1">Catalyzes the ATP-dependent 2-thiolation of cytidine in position 32 of tRNA, to form 2-thiocytidine (s(2)C32). The sulfur atoms are provided by the cysteine/cysteine desulfurase (IscS) system.</text>
</comment>
<comment type="catalytic activity">
    <reaction evidence="1">
        <text>cytidine(32) in tRNA + S-sulfanyl-L-cysteinyl-[cysteine desulfurase] + AH2 + ATP = 2-thiocytidine(32) in tRNA + L-cysteinyl-[cysteine desulfurase] + A + AMP + diphosphate + H(+)</text>
        <dbReference type="Rhea" id="RHEA:57048"/>
        <dbReference type="Rhea" id="RHEA-COMP:10288"/>
        <dbReference type="Rhea" id="RHEA-COMP:12157"/>
        <dbReference type="Rhea" id="RHEA-COMP:12158"/>
        <dbReference type="Rhea" id="RHEA-COMP:14821"/>
        <dbReference type="ChEBI" id="CHEBI:13193"/>
        <dbReference type="ChEBI" id="CHEBI:15378"/>
        <dbReference type="ChEBI" id="CHEBI:17499"/>
        <dbReference type="ChEBI" id="CHEBI:29950"/>
        <dbReference type="ChEBI" id="CHEBI:30616"/>
        <dbReference type="ChEBI" id="CHEBI:33019"/>
        <dbReference type="ChEBI" id="CHEBI:61963"/>
        <dbReference type="ChEBI" id="CHEBI:82748"/>
        <dbReference type="ChEBI" id="CHEBI:141453"/>
        <dbReference type="ChEBI" id="CHEBI:456215"/>
    </reaction>
    <physiologicalReaction direction="left-to-right" evidence="1">
        <dbReference type="Rhea" id="RHEA:57049"/>
    </physiologicalReaction>
</comment>
<comment type="cofactor">
    <cofactor evidence="1">
        <name>Mg(2+)</name>
        <dbReference type="ChEBI" id="CHEBI:18420"/>
    </cofactor>
</comment>
<comment type="cofactor">
    <cofactor evidence="1">
        <name>[4Fe-4S] cluster</name>
        <dbReference type="ChEBI" id="CHEBI:49883"/>
    </cofactor>
    <text evidence="1">Binds 1 [4Fe-4S] cluster per subunit. The cluster is chelated by three Cys residues, the fourth Fe has a free coordination site that may bind a sulfur atom transferred from the persulfide of IscS.</text>
</comment>
<comment type="pathway">
    <text evidence="1">tRNA modification.</text>
</comment>
<comment type="subunit">
    <text evidence="1">Homodimer.</text>
</comment>
<comment type="subcellular location">
    <subcellularLocation>
        <location evidence="1">Cytoplasm</location>
    </subcellularLocation>
</comment>
<comment type="miscellaneous">
    <text evidence="1">The thiolation reaction likely consists of two steps: a first activation step by ATP to form an adenylated intermediate of the target base of tRNA, and a second nucleophilic substitution step of the sulfur (S) atom supplied by the hydrosulfide attached to the Fe-S cluster.</text>
</comment>
<comment type="similarity">
    <text evidence="1">Belongs to the TtcA family.</text>
</comment>
<protein>
    <recommendedName>
        <fullName evidence="1">tRNA-cytidine(32) 2-sulfurtransferase</fullName>
        <ecNumber evidence="1">2.8.1.-</ecNumber>
    </recommendedName>
    <alternativeName>
        <fullName evidence="1">Two-thiocytidine biosynthesis protein A</fullName>
    </alternativeName>
    <alternativeName>
        <fullName evidence="1">tRNA 2-thiocytidine biosynthesis protein TtcA</fullName>
    </alternativeName>
</protein>
<reference key="1">
    <citation type="journal article" date="2006" name="J. Bacteriol.">
        <title>Comparison of the genome sequence of the poultry pathogen Bordetella avium with those of B. bronchiseptica, B. pertussis, and B. parapertussis reveals extensive diversity in surface structures associated with host interaction.</title>
        <authorList>
            <person name="Sebaihia M."/>
            <person name="Preston A."/>
            <person name="Maskell D.J."/>
            <person name="Kuzmiak H."/>
            <person name="Connell T.D."/>
            <person name="King N.D."/>
            <person name="Orndorff P.E."/>
            <person name="Miyamoto D.M."/>
            <person name="Thomson N.R."/>
            <person name="Harris D."/>
            <person name="Goble A."/>
            <person name="Lord A."/>
            <person name="Murphy L."/>
            <person name="Quail M.A."/>
            <person name="Rutter S."/>
            <person name="Squares R."/>
            <person name="Squares S."/>
            <person name="Woodward J."/>
            <person name="Parkhill J."/>
            <person name="Temple L.M."/>
        </authorList>
    </citation>
    <scope>NUCLEOTIDE SEQUENCE [LARGE SCALE GENOMIC DNA]</scope>
    <source>
        <strain>197N</strain>
    </source>
</reference>